<reference key="1">
    <citation type="submission" date="2002-08" db="EMBL/GenBank/DDBJ databases">
        <authorList>
            <person name="Ding P."/>
            <person name="Han W."/>
            <person name="Xia D."/>
            <person name="Li X."/>
            <person name="Song Q."/>
            <person name="Zhang Y."/>
            <person name="Ma D."/>
        </authorList>
    </citation>
    <scope>NUCLEOTIDE SEQUENCE [MRNA]</scope>
    <source>
        <tissue>Brain</tissue>
    </source>
</reference>
<reference key="2">
    <citation type="journal article" date="2003" name="Nature">
        <title>The DNA sequence of human chromosome 7.</title>
        <authorList>
            <person name="Hillier L.W."/>
            <person name="Fulton R.S."/>
            <person name="Fulton L.A."/>
            <person name="Graves T.A."/>
            <person name="Pepin K.H."/>
            <person name="Wagner-McPherson C."/>
            <person name="Layman D."/>
            <person name="Maas J."/>
            <person name="Jaeger S."/>
            <person name="Walker R."/>
            <person name="Wylie K."/>
            <person name="Sekhon M."/>
            <person name="Becker M.C."/>
            <person name="O'Laughlin M.D."/>
            <person name="Schaller M.E."/>
            <person name="Fewell G.A."/>
            <person name="Delehaunty K.D."/>
            <person name="Miner T.L."/>
            <person name="Nash W.E."/>
            <person name="Cordes M."/>
            <person name="Du H."/>
            <person name="Sun H."/>
            <person name="Edwards J."/>
            <person name="Bradshaw-Cordum H."/>
            <person name="Ali J."/>
            <person name="Andrews S."/>
            <person name="Isak A."/>
            <person name="Vanbrunt A."/>
            <person name="Nguyen C."/>
            <person name="Du F."/>
            <person name="Lamar B."/>
            <person name="Courtney L."/>
            <person name="Kalicki J."/>
            <person name="Ozersky P."/>
            <person name="Bielicki L."/>
            <person name="Scott K."/>
            <person name="Holmes A."/>
            <person name="Harkins R."/>
            <person name="Harris A."/>
            <person name="Strong C.M."/>
            <person name="Hou S."/>
            <person name="Tomlinson C."/>
            <person name="Dauphin-Kohlberg S."/>
            <person name="Kozlowicz-Reilly A."/>
            <person name="Leonard S."/>
            <person name="Rohlfing T."/>
            <person name="Rock S.M."/>
            <person name="Tin-Wollam A.-M."/>
            <person name="Abbott A."/>
            <person name="Minx P."/>
            <person name="Maupin R."/>
            <person name="Strowmatt C."/>
            <person name="Latreille P."/>
            <person name="Miller N."/>
            <person name="Johnson D."/>
            <person name="Murray J."/>
            <person name="Woessner J.P."/>
            <person name="Wendl M.C."/>
            <person name="Yang S.-P."/>
            <person name="Schultz B.R."/>
            <person name="Wallis J.W."/>
            <person name="Spieth J."/>
            <person name="Bieri T.A."/>
            <person name="Nelson J.O."/>
            <person name="Berkowicz N."/>
            <person name="Wohldmann P.E."/>
            <person name="Cook L.L."/>
            <person name="Hickenbotham M.T."/>
            <person name="Eldred J."/>
            <person name="Williams D."/>
            <person name="Bedell J.A."/>
            <person name="Mardis E.R."/>
            <person name="Clifton S.W."/>
            <person name="Chissoe S.L."/>
            <person name="Marra M.A."/>
            <person name="Raymond C."/>
            <person name="Haugen E."/>
            <person name="Gillett W."/>
            <person name="Zhou Y."/>
            <person name="James R."/>
            <person name="Phelps K."/>
            <person name="Iadanoto S."/>
            <person name="Bubb K."/>
            <person name="Simms E."/>
            <person name="Levy R."/>
            <person name="Clendenning J."/>
            <person name="Kaul R."/>
            <person name="Kent W.J."/>
            <person name="Furey T.S."/>
            <person name="Baertsch R.A."/>
            <person name="Brent M.R."/>
            <person name="Keibler E."/>
            <person name="Flicek P."/>
            <person name="Bork P."/>
            <person name="Suyama M."/>
            <person name="Bailey J.A."/>
            <person name="Portnoy M.E."/>
            <person name="Torrents D."/>
            <person name="Chinwalla A.T."/>
            <person name="Gish W.R."/>
            <person name="Eddy S.R."/>
            <person name="McPherson J.D."/>
            <person name="Olson M.V."/>
            <person name="Eichler E.E."/>
            <person name="Green E.D."/>
            <person name="Waterston R.H."/>
            <person name="Wilson R.K."/>
        </authorList>
    </citation>
    <scope>NUCLEOTIDE SEQUENCE [LARGE SCALE GENOMIC DNA]</scope>
</reference>
<reference key="3">
    <citation type="submission" date="2005-07" db="EMBL/GenBank/DDBJ databases">
        <authorList>
            <person name="Mural R.J."/>
            <person name="Istrail S."/>
            <person name="Sutton G.G."/>
            <person name="Florea L."/>
            <person name="Halpern A.L."/>
            <person name="Mobarry C.M."/>
            <person name="Lippert R."/>
            <person name="Walenz B."/>
            <person name="Shatkay H."/>
            <person name="Dew I."/>
            <person name="Miller J.R."/>
            <person name="Flanigan M.J."/>
            <person name="Edwards N.J."/>
            <person name="Bolanos R."/>
            <person name="Fasulo D."/>
            <person name="Halldorsson B.V."/>
            <person name="Hannenhalli S."/>
            <person name="Turner R."/>
            <person name="Yooseph S."/>
            <person name="Lu F."/>
            <person name="Nusskern D.R."/>
            <person name="Shue B.C."/>
            <person name="Zheng X.H."/>
            <person name="Zhong F."/>
            <person name="Delcher A.L."/>
            <person name="Huson D.H."/>
            <person name="Kravitz S.A."/>
            <person name="Mouchard L."/>
            <person name="Reinert K."/>
            <person name="Remington K.A."/>
            <person name="Clark A.G."/>
            <person name="Waterman M.S."/>
            <person name="Eichler E.E."/>
            <person name="Adams M.D."/>
            <person name="Hunkapiller M.W."/>
            <person name="Myers E.W."/>
            <person name="Venter J.C."/>
        </authorList>
    </citation>
    <scope>NUCLEOTIDE SEQUENCE [LARGE SCALE GENOMIC DNA]</scope>
    <scope>VARIANT MET-322</scope>
</reference>
<reference key="4">
    <citation type="journal article" date="2004" name="Genome Res.">
        <title>The status, quality, and expansion of the NIH full-length cDNA project: the Mammalian Gene Collection (MGC).</title>
        <authorList>
            <consortium name="The MGC Project Team"/>
        </authorList>
    </citation>
    <scope>NUCLEOTIDE SEQUENCE [LARGE SCALE MRNA]</scope>
    <scope>VARIANT MET-322</scope>
    <source>
        <tissue>Chondrosarcoma</tissue>
        <tissue>Testis</tissue>
    </source>
</reference>
<reference key="5">
    <citation type="journal article" date="2004" name="Nat. Genet.">
        <title>Complete sequencing and characterization of 21,243 full-length human cDNAs.</title>
        <authorList>
            <person name="Ota T."/>
            <person name="Suzuki Y."/>
            <person name="Nishikawa T."/>
            <person name="Otsuki T."/>
            <person name="Sugiyama T."/>
            <person name="Irie R."/>
            <person name="Wakamatsu A."/>
            <person name="Hayashi K."/>
            <person name="Sato H."/>
            <person name="Nagai K."/>
            <person name="Kimura K."/>
            <person name="Makita H."/>
            <person name="Sekine M."/>
            <person name="Obayashi M."/>
            <person name="Nishi T."/>
            <person name="Shibahara T."/>
            <person name="Tanaka T."/>
            <person name="Ishii S."/>
            <person name="Yamamoto J."/>
            <person name="Saito K."/>
            <person name="Kawai Y."/>
            <person name="Isono Y."/>
            <person name="Nakamura Y."/>
            <person name="Nagahari K."/>
            <person name="Murakami K."/>
            <person name="Yasuda T."/>
            <person name="Iwayanagi T."/>
            <person name="Wagatsuma M."/>
            <person name="Shiratori A."/>
            <person name="Sudo H."/>
            <person name="Hosoiri T."/>
            <person name="Kaku Y."/>
            <person name="Kodaira H."/>
            <person name="Kondo H."/>
            <person name="Sugawara M."/>
            <person name="Takahashi M."/>
            <person name="Kanda K."/>
            <person name="Yokoi T."/>
            <person name="Furuya T."/>
            <person name="Kikkawa E."/>
            <person name="Omura Y."/>
            <person name="Abe K."/>
            <person name="Kamihara K."/>
            <person name="Katsuta N."/>
            <person name="Sato K."/>
            <person name="Tanikawa M."/>
            <person name="Yamazaki M."/>
            <person name="Ninomiya K."/>
            <person name="Ishibashi T."/>
            <person name="Yamashita H."/>
            <person name="Murakawa K."/>
            <person name="Fujimori K."/>
            <person name="Tanai H."/>
            <person name="Kimata M."/>
            <person name="Watanabe M."/>
            <person name="Hiraoka S."/>
            <person name="Chiba Y."/>
            <person name="Ishida S."/>
            <person name="Ono Y."/>
            <person name="Takiguchi S."/>
            <person name="Watanabe S."/>
            <person name="Yosida M."/>
            <person name="Hotuta T."/>
            <person name="Kusano J."/>
            <person name="Kanehori K."/>
            <person name="Takahashi-Fujii A."/>
            <person name="Hara H."/>
            <person name="Tanase T.-O."/>
            <person name="Nomura Y."/>
            <person name="Togiya S."/>
            <person name="Komai F."/>
            <person name="Hara R."/>
            <person name="Takeuchi K."/>
            <person name="Arita M."/>
            <person name="Imose N."/>
            <person name="Musashino K."/>
            <person name="Yuuki H."/>
            <person name="Oshima A."/>
            <person name="Sasaki N."/>
            <person name="Aotsuka S."/>
            <person name="Yoshikawa Y."/>
            <person name="Matsunawa H."/>
            <person name="Ichihara T."/>
            <person name="Shiohata N."/>
            <person name="Sano S."/>
            <person name="Moriya S."/>
            <person name="Momiyama H."/>
            <person name="Satoh N."/>
            <person name="Takami S."/>
            <person name="Terashima Y."/>
            <person name="Suzuki O."/>
            <person name="Nakagawa S."/>
            <person name="Senoh A."/>
            <person name="Mizoguchi H."/>
            <person name="Goto Y."/>
            <person name="Shimizu F."/>
            <person name="Wakebe H."/>
            <person name="Hishigaki H."/>
            <person name="Watanabe T."/>
            <person name="Sugiyama A."/>
            <person name="Takemoto M."/>
            <person name="Kawakami B."/>
            <person name="Yamazaki M."/>
            <person name="Watanabe K."/>
            <person name="Kumagai A."/>
            <person name="Itakura S."/>
            <person name="Fukuzumi Y."/>
            <person name="Fujimori Y."/>
            <person name="Komiyama M."/>
            <person name="Tashiro H."/>
            <person name="Tanigami A."/>
            <person name="Fujiwara T."/>
            <person name="Ono T."/>
            <person name="Yamada K."/>
            <person name="Fujii Y."/>
            <person name="Ozaki K."/>
            <person name="Hirao M."/>
            <person name="Ohmori Y."/>
            <person name="Kawabata A."/>
            <person name="Hikiji T."/>
            <person name="Kobatake N."/>
            <person name="Inagaki H."/>
            <person name="Ikema Y."/>
            <person name="Okamoto S."/>
            <person name="Okitani R."/>
            <person name="Kawakami T."/>
            <person name="Noguchi S."/>
            <person name="Itoh T."/>
            <person name="Shigeta K."/>
            <person name="Senba T."/>
            <person name="Matsumura K."/>
            <person name="Nakajima Y."/>
            <person name="Mizuno T."/>
            <person name="Morinaga M."/>
            <person name="Sasaki M."/>
            <person name="Togashi T."/>
            <person name="Oyama M."/>
            <person name="Hata H."/>
            <person name="Watanabe M."/>
            <person name="Komatsu T."/>
            <person name="Mizushima-Sugano J."/>
            <person name="Satoh T."/>
            <person name="Shirai Y."/>
            <person name="Takahashi Y."/>
            <person name="Nakagawa K."/>
            <person name="Okumura K."/>
            <person name="Nagase T."/>
            <person name="Nomura N."/>
            <person name="Kikuchi H."/>
            <person name="Masuho Y."/>
            <person name="Yamashita R."/>
            <person name="Nakai K."/>
            <person name="Yada T."/>
            <person name="Nakamura Y."/>
            <person name="Ohara O."/>
            <person name="Isogai T."/>
            <person name="Sugano S."/>
        </authorList>
    </citation>
    <scope>NUCLEOTIDE SEQUENCE [LARGE SCALE MRNA] OF 1-451</scope>
    <scope>VARIANT MET-322</scope>
</reference>
<reference key="6">
    <citation type="journal article" date="2013" name="J. Proteome Res.">
        <title>Toward a comprehensive characterization of a human cancer cell phosphoproteome.</title>
        <authorList>
            <person name="Zhou H."/>
            <person name="Di Palma S."/>
            <person name="Preisinger C."/>
            <person name="Peng M."/>
            <person name="Polat A.N."/>
            <person name="Heck A.J."/>
            <person name="Mohammed S."/>
        </authorList>
    </citation>
    <scope>PHOSPHORYLATION [LARGE SCALE ANALYSIS] AT SER-219; SER-223 AND SER-289</scope>
    <scope>IDENTIFICATION BY MASS SPECTROMETRY [LARGE SCALE ANALYSIS]</scope>
    <source>
        <tissue>Erythroleukemia</tissue>
    </source>
</reference>
<keyword id="KW-0378">Hydrolase</keyword>
<keyword id="KW-0597">Phosphoprotein</keyword>
<keyword id="KW-0645">Protease</keyword>
<keyword id="KW-1267">Proteomics identification</keyword>
<keyword id="KW-1185">Reference proteome</keyword>
<keyword id="KW-0788">Thiol protease</keyword>
<keyword id="KW-0833">Ubl conjugation pathway</keyword>
<feature type="chain" id="PRO_0000320590" description="Probable ubiquitin carboxyl-terminal hydrolase MINDY-4">
    <location>
        <begin position="1"/>
        <end position="757"/>
    </location>
</feature>
<feature type="region of interest" description="Disordered" evidence="3">
    <location>
        <begin position="152"/>
        <end position="173"/>
    </location>
</feature>
<feature type="region of interest" description="Disordered" evidence="3">
    <location>
        <begin position="190"/>
        <end position="334"/>
    </location>
</feature>
<feature type="compositionally biased region" description="Basic and acidic residues" evidence="3">
    <location>
        <begin position="190"/>
        <end position="201"/>
    </location>
</feature>
<feature type="compositionally biased region" description="Low complexity" evidence="3">
    <location>
        <begin position="232"/>
        <end position="242"/>
    </location>
</feature>
<feature type="compositionally biased region" description="Polar residues" evidence="3">
    <location>
        <begin position="254"/>
        <end position="277"/>
    </location>
</feature>
<feature type="compositionally biased region" description="Basic and acidic residues" evidence="3">
    <location>
        <begin position="299"/>
        <end position="310"/>
    </location>
</feature>
<feature type="active site" description="Nucleophile" evidence="1">
    <location>
        <position position="456"/>
    </location>
</feature>
<feature type="active site" description="Proton acceptor" evidence="1">
    <location>
        <position position="677"/>
    </location>
</feature>
<feature type="modified residue" description="Phosphoserine" evidence="9">
    <location>
        <position position="219"/>
    </location>
</feature>
<feature type="modified residue" description="Phosphoserine" evidence="9">
    <location>
        <position position="223"/>
    </location>
</feature>
<feature type="modified residue" description="Phosphoserine" evidence="9">
    <location>
        <position position="289"/>
    </location>
</feature>
<feature type="sequence variant" id="VAR_039212" description="In dbSNP:rs34357272.">
    <original>D</original>
    <variation>A</variation>
    <location>
        <position position="183"/>
    </location>
</feature>
<feature type="sequence variant" id="VAR_039213" description="In dbSNP:rs17159453.">
    <original>S</original>
    <variation>L</variation>
    <location>
        <position position="262"/>
    </location>
</feature>
<feature type="sequence variant" id="VAR_039214" description="In dbSNP:rs12701034." evidence="4 5 6">
    <original>T</original>
    <variation>M</variation>
    <location>
        <position position="322"/>
    </location>
</feature>
<feature type="sequence variant" id="VAR_039215" description="In dbSNP:rs35897481.">
    <original>R</original>
    <variation>K</variation>
    <location>
        <position position="324"/>
    </location>
</feature>
<feature type="sequence variant" id="VAR_039216" description="In dbSNP:rs12672119.">
    <original>A</original>
    <variation>V</variation>
    <location>
        <position position="355"/>
    </location>
</feature>
<feature type="sequence variant" id="VAR_062248" description="In dbSNP:rs34970833.">
    <original>C</original>
    <variation>Y</variation>
    <location>
        <position position="465"/>
    </location>
</feature>
<feature type="sequence variant" id="VAR_039217" description="In dbSNP:rs10216063.">
    <original>M</original>
    <variation>V</variation>
    <location>
        <position position="655"/>
    </location>
</feature>
<feature type="sequence conflict" description="In Ref. 1; AAQ10898." evidence="7" ref="1">
    <original>R</original>
    <variation>G</variation>
    <location>
        <position position="246"/>
    </location>
</feature>
<feature type="sequence conflict" description="In Ref. 1; AAQ10898." evidence="7" ref="1">
    <original>G</original>
    <variation>A</variation>
    <location>
        <position position="483"/>
    </location>
</feature>
<feature type="sequence conflict" description="In Ref. 1; AAQ10898." evidence="7" ref="1">
    <original>I</original>
    <variation>F</variation>
    <location>
        <position position="632"/>
    </location>
</feature>
<feature type="sequence conflict" description="In Ref. 1; AAQ10898." evidence="7" ref="1">
    <original>L</original>
    <variation>F</variation>
    <location>
        <position position="647"/>
    </location>
</feature>
<dbReference type="EC" id="3.4.19.12"/>
<dbReference type="EMBL" id="AF538962">
    <property type="protein sequence ID" value="AAQ10898.1"/>
    <property type="status" value="ALT_FRAME"/>
    <property type="molecule type" value="mRNA"/>
</dbReference>
<dbReference type="EMBL" id="AC004691">
    <property type="status" value="NOT_ANNOTATED_CDS"/>
    <property type="molecule type" value="Genomic_DNA"/>
</dbReference>
<dbReference type="EMBL" id="CH471073">
    <property type="protein sequence ID" value="EAW93970.1"/>
    <property type="molecule type" value="Genomic_DNA"/>
</dbReference>
<dbReference type="EMBL" id="BC098569">
    <property type="protein sequence ID" value="AAH98569.1"/>
    <property type="molecule type" value="mRNA"/>
</dbReference>
<dbReference type="EMBL" id="AK026027">
    <property type="protein sequence ID" value="BAB15327.1"/>
    <property type="status" value="ALT_SEQ"/>
    <property type="molecule type" value="mRNA"/>
</dbReference>
<dbReference type="CCDS" id="CCDS43565.1"/>
<dbReference type="RefSeq" id="NP_115598.2">
    <property type="nucleotide sequence ID" value="NM_032222.3"/>
</dbReference>
<dbReference type="BioGRID" id="123932">
    <property type="interactions" value="72"/>
</dbReference>
<dbReference type="FunCoup" id="Q4G0A6">
    <property type="interactions" value="62"/>
</dbReference>
<dbReference type="IntAct" id="Q4G0A6">
    <property type="interactions" value="1"/>
</dbReference>
<dbReference type="STRING" id="9606.ENSP00000265299"/>
<dbReference type="iPTMnet" id="Q4G0A6"/>
<dbReference type="PhosphoSitePlus" id="Q4G0A6"/>
<dbReference type="BioMuta" id="MINDY4"/>
<dbReference type="DMDM" id="296434499"/>
<dbReference type="jPOST" id="Q4G0A6"/>
<dbReference type="MassIVE" id="Q4G0A6"/>
<dbReference type="PaxDb" id="9606-ENSP00000265299"/>
<dbReference type="PeptideAtlas" id="Q4G0A6"/>
<dbReference type="ProteomicsDB" id="62101"/>
<dbReference type="Pumba" id="Q4G0A6"/>
<dbReference type="Antibodypedia" id="3440">
    <property type="antibodies" value="38 antibodies from 13 providers"/>
</dbReference>
<dbReference type="DNASU" id="84182"/>
<dbReference type="Ensembl" id="ENST00000265299.6">
    <property type="protein sequence ID" value="ENSP00000265299.6"/>
    <property type="gene ID" value="ENSG00000106125.14"/>
</dbReference>
<dbReference type="GeneID" id="84182"/>
<dbReference type="KEGG" id="hsa:84182"/>
<dbReference type="MANE-Select" id="ENST00000265299.6">
    <property type="protein sequence ID" value="ENSP00000265299.6"/>
    <property type="RefSeq nucleotide sequence ID" value="NM_032222.3"/>
    <property type="RefSeq protein sequence ID" value="NP_115598.2"/>
</dbReference>
<dbReference type="UCSC" id="uc003tbt.3">
    <property type="organism name" value="human"/>
</dbReference>
<dbReference type="AGR" id="HGNC:21916"/>
<dbReference type="CTD" id="84182"/>
<dbReference type="DisGeNET" id="84182"/>
<dbReference type="GeneCards" id="MINDY4"/>
<dbReference type="HGNC" id="HGNC:21916">
    <property type="gene designation" value="MINDY4"/>
</dbReference>
<dbReference type="HPA" id="ENSG00000106125">
    <property type="expression patterns" value="Low tissue specificity"/>
</dbReference>
<dbReference type="neXtProt" id="NX_Q4G0A6"/>
<dbReference type="OpenTargets" id="ENSG00000106125"/>
<dbReference type="PharmGKB" id="PA165618038"/>
<dbReference type="VEuPathDB" id="HostDB:ENSG00000106125"/>
<dbReference type="eggNOG" id="KOG2871">
    <property type="taxonomic scope" value="Eukaryota"/>
</dbReference>
<dbReference type="GeneTree" id="ENSGT00940000159600"/>
<dbReference type="HOGENOM" id="CLU_011769_1_0_1"/>
<dbReference type="InParanoid" id="Q4G0A6"/>
<dbReference type="OMA" id="SCFSTEW"/>
<dbReference type="OrthoDB" id="10263628at2759"/>
<dbReference type="PAN-GO" id="Q4G0A6">
    <property type="GO annotations" value="1 GO annotation based on evolutionary models"/>
</dbReference>
<dbReference type="PhylomeDB" id="Q4G0A6"/>
<dbReference type="TreeFam" id="TF323996"/>
<dbReference type="PathwayCommons" id="Q4G0A6"/>
<dbReference type="BioGRID-ORCS" id="84182">
    <property type="hits" value="12 hits in 1187 CRISPR screens"/>
</dbReference>
<dbReference type="CD-CODE" id="FB4E32DD">
    <property type="entry name" value="Presynaptic clusters and postsynaptic densities"/>
</dbReference>
<dbReference type="GeneWiki" id="C7orf67"/>
<dbReference type="GenomeRNAi" id="84182"/>
<dbReference type="Pharos" id="Q4G0A6">
    <property type="development level" value="Tdark"/>
</dbReference>
<dbReference type="PRO" id="PR:Q4G0A6"/>
<dbReference type="Proteomes" id="UP000005640">
    <property type="component" value="Chromosome 7"/>
</dbReference>
<dbReference type="RNAct" id="Q4G0A6">
    <property type="molecule type" value="protein"/>
</dbReference>
<dbReference type="Bgee" id="ENSG00000106125">
    <property type="expression patterns" value="Expressed in right uterine tube and 100 other cell types or tissues"/>
</dbReference>
<dbReference type="GO" id="GO:0004843">
    <property type="term" value="F:cysteine-type deubiquitinase activity"/>
    <property type="evidence" value="ECO:0007669"/>
    <property type="project" value="UniProtKB-EC"/>
</dbReference>
<dbReference type="GO" id="GO:1990380">
    <property type="term" value="F:K48-linked deubiquitinase activity"/>
    <property type="evidence" value="ECO:0000318"/>
    <property type="project" value="GO_Central"/>
</dbReference>
<dbReference type="GO" id="GO:0071108">
    <property type="term" value="P:protein K48-linked deubiquitination"/>
    <property type="evidence" value="ECO:0007669"/>
    <property type="project" value="InterPro"/>
</dbReference>
<dbReference type="GO" id="GO:0006508">
    <property type="term" value="P:proteolysis"/>
    <property type="evidence" value="ECO:0007669"/>
    <property type="project" value="UniProtKB-KW"/>
</dbReference>
<dbReference type="InterPro" id="IPR025257">
    <property type="entry name" value="MINDY-3/4_CD"/>
</dbReference>
<dbReference type="InterPro" id="IPR039785">
    <property type="entry name" value="MINY3/4"/>
</dbReference>
<dbReference type="PANTHER" id="PTHR12473">
    <property type="entry name" value="UBIQUITIN CARBOXYL-TERMINAL HYDROLASE MINDY-4-RELATED"/>
    <property type="match status" value="1"/>
</dbReference>
<dbReference type="PANTHER" id="PTHR12473:SF8">
    <property type="entry name" value="UBIQUITIN CARBOXYL-TERMINAL HYDROLASE MINDY-4-RELATED"/>
    <property type="match status" value="1"/>
</dbReference>
<dbReference type="Pfam" id="PF13898">
    <property type="entry name" value="MINDY-3_4_CD"/>
    <property type="match status" value="1"/>
</dbReference>
<dbReference type="SMART" id="SM01174">
    <property type="entry name" value="DUF4205"/>
    <property type="match status" value="1"/>
</dbReference>
<proteinExistence type="evidence at protein level"/>
<sequence>MDSLFVEEVAASLVREFLSRKGLKKTCVTMDQERPRSDLSINNRNDLRKVLHLEFLYKENKAKENPLKTSLELITRYFLDHFGNTANNFTQDTPIPALSVPKKNNKVPSRCSETTLVNIYDLSDEDAGWRTSLSETSKARHDNLDGDVLGNFVSSKRPPHKSKPMQTVPGETPVLTSAWEKIDKLHSEPSLDVKRMGENSRPKSGLIVRGMMSGPIASSPQDSFHRHYLRRSSPSSSSTQPQEESRKVPELFVCTQQDILASSNSSPSRTSLGQLSELTVERQKTTASSPPHLPSKRLPPWDRARPRDPSEDTPAVDGSTDTDRMPLKLYLPGGNSRMTQERLERAFKRQGSQPAPVRKNQLLPSDKVDGELGALRLEDVEDELIREEVILSPVPSVLKLQTASKPIDLSVAKEIKTLLFGSSFCCFNEEWKLQSFSFSNTASLKYGIVQNKGGPCGVLAAVQGCVLQKLLFEGDSKADCAQGLQPSDAHRTRCLVLALADIVWRAGGRERAVVALASRTQQFSPTGKYKADGVLETLTLHSLTCYEDLVTFLQQSIHQFEVGPYGCILLTLSAILSRSTELIRQDFDVPTSHLIGAHGYCTQELVNLLLTGKAVSNVFNDVVELDSGDGNITLLRGIAARSDIGFLSLFEHYNMCQVGCFLKTPRFPIWVVCSESHFSILFSLQPGLLRDWRTERLFDLYYYDGLANQQEQIRLTIDTTQTISEDTDNDLVPPLELCIRTKWKGASVNWNGSDPIL</sequence>
<evidence type="ECO:0000250" key="1">
    <source>
        <dbReference type="UniProtKB" id="Q8N5J2"/>
    </source>
</evidence>
<evidence type="ECO:0000250" key="2">
    <source>
        <dbReference type="UniProtKB" id="Q8NBR6"/>
    </source>
</evidence>
<evidence type="ECO:0000256" key="3">
    <source>
        <dbReference type="SAM" id="MobiDB-lite"/>
    </source>
</evidence>
<evidence type="ECO:0000269" key="4">
    <source>
    </source>
</evidence>
<evidence type="ECO:0000269" key="5">
    <source>
    </source>
</evidence>
<evidence type="ECO:0000269" key="6">
    <source ref="3"/>
</evidence>
<evidence type="ECO:0000305" key="7"/>
<evidence type="ECO:0000312" key="8">
    <source>
        <dbReference type="HGNC" id="HGNC:21916"/>
    </source>
</evidence>
<evidence type="ECO:0007744" key="9">
    <source>
    </source>
</evidence>
<name>MINY4_HUMAN</name>
<comment type="function">
    <text evidence="2">Probable hydrolase that can remove 'Lys-48'-linked conjugated ubiquitin from proteins.</text>
</comment>
<comment type="catalytic activity">
    <reaction evidence="2">
        <text>Thiol-dependent hydrolysis of ester, thioester, amide, peptide and isopeptide bonds formed by the C-terminal Gly of ubiquitin (a 76-residue protein attached to proteins as an intracellular targeting signal).</text>
        <dbReference type="EC" id="3.4.19.12"/>
    </reaction>
</comment>
<comment type="similarity">
    <text evidence="7">Belongs to the MINDY deubiquitinase family. FAM188 subfamily.</text>
</comment>
<comment type="sequence caution" evidence="7">
    <conflict type="frameshift">
        <sequence resource="EMBL-CDS" id="AAQ10898"/>
    </conflict>
</comment>
<comment type="sequence caution" evidence="7">
    <conflict type="miscellaneous discrepancy">
        <sequence resource="EMBL-CDS" id="BAB15327"/>
    </conflict>
    <text>Contaminating sequence. Potential poly-A sequence.</text>
</comment>
<accession>Q4G0A6</accession>
<accession>Q71AZ7</accession>
<accession>Q9H6D2</accession>
<protein>
    <recommendedName>
        <fullName>Probable ubiquitin carboxyl-terminal hydrolase MINDY-4</fullName>
        <ecNumber>3.4.19.12</ecNumber>
    </recommendedName>
    <alternativeName>
        <fullName>Probable deubiquitinating enzyme MINDY-4</fullName>
    </alternativeName>
</protein>
<organism>
    <name type="scientific">Homo sapiens</name>
    <name type="common">Human</name>
    <dbReference type="NCBI Taxonomy" id="9606"/>
    <lineage>
        <taxon>Eukaryota</taxon>
        <taxon>Metazoa</taxon>
        <taxon>Chordata</taxon>
        <taxon>Craniata</taxon>
        <taxon>Vertebrata</taxon>
        <taxon>Euteleostomi</taxon>
        <taxon>Mammalia</taxon>
        <taxon>Eutheria</taxon>
        <taxon>Euarchontoglires</taxon>
        <taxon>Primates</taxon>
        <taxon>Haplorrhini</taxon>
        <taxon>Catarrhini</taxon>
        <taxon>Hominidae</taxon>
        <taxon>Homo</taxon>
    </lineage>
</organism>
<gene>
    <name evidence="8" type="primary">MINDY4</name>
    <name type="synonym">C7orf67</name>
    <name type="synonym">FAM188B</name>
</gene>